<organism>
    <name type="scientific">Clarkia breweri</name>
    <name type="common">Fairy fans</name>
    <name type="synonym">Eucharidium breweri</name>
    <dbReference type="NCBI Taxonomy" id="36903"/>
    <lineage>
        <taxon>Eukaryota</taxon>
        <taxon>Viridiplantae</taxon>
        <taxon>Streptophyta</taxon>
        <taxon>Embryophyta</taxon>
        <taxon>Tracheophyta</taxon>
        <taxon>Spermatophyta</taxon>
        <taxon>Magnoliopsida</taxon>
        <taxon>eudicotyledons</taxon>
        <taxon>Gunneridae</taxon>
        <taxon>Pentapetalae</taxon>
        <taxon>rosids</taxon>
        <taxon>malvids</taxon>
        <taxon>Myrtales</taxon>
        <taxon>Onagraceae</taxon>
        <taxon>Onagroideae</taxon>
        <taxon>Onagreae</taxon>
        <taxon>Clarkia</taxon>
    </lineage>
</organism>
<gene>
    <name type="primary">IEMT1</name>
</gene>
<proteinExistence type="evidence at protein level"/>
<name>IEMT_CLABR</name>
<accession>O04385</accession>
<feature type="propeptide" id="PRO_0000248970" evidence="4">
    <location>
        <begin position="1"/>
        <end position="2"/>
    </location>
</feature>
<feature type="chain" id="PRO_0000063218" description="(Iso)eugenol O-methyltransferase">
    <location>
        <begin position="3"/>
        <end position="368"/>
    </location>
</feature>
<feature type="active site" description="Proton acceptor" evidence="1">
    <location>
        <position position="272"/>
    </location>
</feature>
<feature type="binding site" evidence="3">
    <location>
        <position position="187"/>
    </location>
    <ligand>
        <name>S-adenosyl-L-methionine</name>
        <dbReference type="ChEBI" id="CHEBI:59789"/>
    </ligand>
</feature>
<feature type="binding site" evidence="3">
    <location>
        <begin position="211"/>
        <end position="212"/>
    </location>
    <ligand>
        <name>S-adenosyl-L-methionine</name>
        <dbReference type="ChEBI" id="CHEBI:59789"/>
    </ligand>
</feature>
<feature type="binding site" evidence="3">
    <location>
        <position position="234"/>
    </location>
    <ligand>
        <name>S-adenosyl-L-methionine</name>
        <dbReference type="ChEBI" id="CHEBI:59789"/>
    </ligand>
</feature>
<feature type="binding site" evidence="3">
    <location>
        <begin position="254"/>
        <end position="255"/>
    </location>
    <ligand>
        <name>S-adenosyl-L-methionine</name>
        <dbReference type="ChEBI" id="CHEBI:59789"/>
    </ligand>
</feature>
<feature type="binding site" evidence="3">
    <location>
        <position position="268"/>
    </location>
    <ligand>
        <name>S-adenosyl-L-methionine</name>
        <dbReference type="ChEBI" id="CHEBI:59789"/>
    </ligand>
</feature>
<feature type="mutagenesis site" description="No effect on substrate preference." evidence="2">
    <original>YT</original>
    <variation>CS</variation>
    <location>
        <begin position="95"/>
        <end position="96"/>
    </location>
</feature>
<feature type="mutagenesis site" description="No effect on substrate preference." evidence="2">
    <original>S</original>
    <variation>D</variation>
    <location>
        <position position="102"/>
    </location>
</feature>
<feature type="mutagenesis site" description="No effect on substrate preference. Decreases substrate discrimination; when associated with 164-TA-165. Substrate preference changed; when associated with 133-MNQ-135 or 133-MNQ-135 and 164-TA-165." evidence="2">
    <original>FL</original>
    <variation>LC</variation>
    <location>
        <begin position="130"/>
        <end position="131"/>
    </location>
</feature>
<feature type="mutagenesis site" description="Decreases substrate discrimination. Substrate preference changed; when associated with 130-LC-131 or 164-TA-165 or 130-LC-131 and 164-TA-165." evidence="2">
    <original>TAT</original>
    <variation>MNQ</variation>
    <location>
        <begin position="133"/>
        <end position="135"/>
    </location>
</feature>
<feature type="mutagenesis site" description="No effect on substrate preference; when associated with S-142 and Y-144." evidence="2">
    <original>L</original>
    <variation>M</variation>
    <location>
        <position position="140"/>
    </location>
</feature>
<feature type="mutagenesis site" description="No effect on substrate preference; when associated with M-140 and Y-144." evidence="2">
    <original>P</original>
    <variation>S</variation>
    <location>
        <position position="142"/>
    </location>
</feature>
<feature type="mutagenesis site" description="No effect on substrate preference; when associated with M-140 and S-142." evidence="2">
    <original>F</original>
    <variation>Y</variation>
    <location>
        <position position="144"/>
    </location>
</feature>
<feature type="mutagenesis site" description="Decreases substrate discrimination. Decreases substrate discrimination; when associated with 130-LC-131. Substrate preference changed; when associated with 133-MNQ-135 or 130-LC-131 and 133-MNQ-135." evidence="2">
    <original>NE</original>
    <variation>TA</variation>
    <location>
        <begin position="164"/>
        <end position="165"/>
    </location>
</feature>
<feature type="mutagenesis site" description="No effect on substrate preference." evidence="2">
    <original>H</original>
    <variation>P</variation>
    <location>
        <position position="173"/>
    </location>
</feature>
<feature type="helix" evidence="5">
    <location>
        <begin position="17"/>
        <end position="30"/>
    </location>
</feature>
<feature type="helix" evidence="5">
    <location>
        <begin position="33"/>
        <end position="43"/>
    </location>
</feature>
<feature type="helix" evidence="5">
    <location>
        <begin position="46"/>
        <end position="53"/>
    </location>
</feature>
<feature type="strand" evidence="5">
    <location>
        <begin position="56"/>
        <end position="58"/>
    </location>
</feature>
<feature type="helix" evidence="5">
    <location>
        <begin position="62"/>
        <end position="66"/>
    </location>
</feature>
<feature type="helix" evidence="5">
    <location>
        <begin position="76"/>
        <end position="89"/>
    </location>
</feature>
<feature type="strand" evidence="5">
    <location>
        <begin position="92"/>
        <end position="98"/>
    </location>
</feature>
<feature type="strand" evidence="5">
    <location>
        <begin position="101"/>
        <end position="104"/>
    </location>
</feature>
<feature type="strand" evidence="5">
    <location>
        <begin position="106"/>
        <end position="111"/>
    </location>
</feature>
<feature type="helix" evidence="5">
    <location>
        <begin position="113"/>
        <end position="117"/>
    </location>
</feature>
<feature type="helix" evidence="5">
    <location>
        <begin position="128"/>
        <end position="134"/>
    </location>
</feature>
<feature type="helix" evidence="5">
    <location>
        <begin position="137"/>
        <end position="140"/>
    </location>
</feature>
<feature type="helix" evidence="5">
    <location>
        <begin position="141"/>
        <end position="145"/>
    </location>
</feature>
<feature type="helix" evidence="5">
    <location>
        <begin position="146"/>
        <end position="152"/>
    </location>
</feature>
<feature type="helix" evidence="5">
    <location>
        <begin position="156"/>
        <end position="161"/>
    </location>
</feature>
<feature type="helix" evidence="5">
    <location>
        <begin position="165"/>
        <end position="169"/>
    </location>
</feature>
<feature type="helix" evidence="5">
    <location>
        <begin position="173"/>
        <end position="197"/>
    </location>
</feature>
<feature type="turn" evidence="5">
    <location>
        <begin position="200"/>
        <end position="203"/>
    </location>
</feature>
<feature type="strand" evidence="5">
    <location>
        <begin position="205"/>
        <end position="210"/>
    </location>
</feature>
<feature type="helix" evidence="5">
    <location>
        <begin position="216"/>
        <end position="224"/>
    </location>
</feature>
<feature type="strand" evidence="5">
    <location>
        <begin position="229"/>
        <end position="234"/>
    </location>
</feature>
<feature type="helix" evidence="5">
    <location>
        <begin position="236"/>
        <end position="239"/>
    </location>
</feature>
<feature type="strand" evidence="5">
    <location>
        <begin position="248"/>
        <end position="252"/>
    </location>
</feature>
<feature type="turn" evidence="5">
    <location>
        <begin position="255"/>
        <end position="257"/>
    </location>
</feature>
<feature type="strand" evidence="5">
    <location>
        <begin position="263"/>
        <end position="269"/>
    </location>
</feature>
<feature type="helix" evidence="5">
    <location>
        <begin position="271"/>
        <end position="273"/>
    </location>
</feature>
<feature type="helix" evidence="5">
    <location>
        <begin position="276"/>
        <end position="289"/>
    </location>
</feature>
<feature type="strand" evidence="5">
    <location>
        <begin position="295"/>
        <end position="300"/>
    </location>
</feature>
<feature type="helix" evidence="5">
    <location>
        <begin position="311"/>
        <end position="326"/>
    </location>
</feature>
<feature type="strand" evidence="5">
    <location>
        <begin position="327"/>
        <end position="329"/>
    </location>
</feature>
<feature type="helix" evidence="5">
    <location>
        <begin position="335"/>
        <end position="344"/>
    </location>
</feature>
<feature type="strand" evidence="5">
    <location>
        <begin position="349"/>
        <end position="356"/>
    </location>
</feature>
<feature type="strand" evidence="5">
    <location>
        <begin position="359"/>
        <end position="366"/>
    </location>
</feature>
<protein>
    <recommendedName>
        <fullName>(Iso)eugenol O-methyltransferase</fullName>
        <ecNumber>2.1.1.146</ecNumber>
    </recommendedName>
    <alternativeName>
        <fullName>S-adenosysl-L-methionine:(Iso)eugenol O-methyltransferase</fullName>
        <shortName>IEMT</shortName>
    </alternativeName>
</protein>
<dbReference type="EC" id="2.1.1.146"/>
<dbReference type="EMBL" id="U86760">
    <property type="protein sequence ID" value="AAC01533.1"/>
    <property type="molecule type" value="mRNA"/>
</dbReference>
<dbReference type="PDB" id="3REO">
    <property type="method" value="X-ray"/>
    <property type="resolution" value="1.90 A"/>
    <property type="chains" value="A/B/C/D=1-368"/>
</dbReference>
<dbReference type="PDB" id="3TKY">
    <property type="method" value="X-ray"/>
    <property type="resolution" value="2.47 A"/>
    <property type="chains" value="A/B/C/D=1-368"/>
</dbReference>
<dbReference type="PDB" id="5CVJ">
    <property type="method" value="X-ray"/>
    <property type="resolution" value="1.80 A"/>
    <property type="chains" value="A/B/C/D=1-368"/>
</dbReference>
<dbReference type="PDB" id="5CVU">
    <property type="method" value="X-ray"/>
    <property type="resolution" value="1.80 A"/>
    <property type="chains" value="A/B/C/D=1-368"/>
</dbReference>
<dbReference type="PDB" id="5CVV">
    <property type="method" value="X-ray"/>
    <property type="resolution" value="1.73 A"/>
    <property type="chains" value="A/B=1-368"/>
</dbReference>
<dbReference type="PDBsum" id="3REO"/>
<dbReference type="PDBsum" id="3TKY"/>
<dbReference type="PDBsum" id="5CVJ"/>
<dbReference type="PDBsum" id="5CVU"/>
<dbReference type="PDBsum" id="5CVV"/>
<dbReference type="SMR" id="O04385"/>
<dbReference type="KEGG" id="ag:AAC01533"/>
<dbReference type="BRENDA" id="2.1.1.146">
    <property type="organism ID" value="1437"/>
</dbReference>
<dbReference type="SABIO-RK" id="O04385"/>
<dbReference type="EvolutionaryTrace" id="O04385"/>
<dbReference type="GO" id="GO:0050630">
    <property type="term" value="F:(iso)eugenol O-methyltransferase activity"/>
    <property type="evidence" value="ECO:0007669"/>
    <property type="project" value="UniProtKB-EC"/>
</dbReference>
<dbReference type="GO" id="GO:0046983">
    <property type="term" value="F:protein dimerization activity"/>
    <property type="evidence" value="ECO:0007669"/>
    <property type="project" value="InterPro"/>
</dbReference>
<dbReference type="GO" id="GO:0032259">
    <property type="term" value="P:methylation"/>
    <property type="evidence" value="ECO:0007669"/>
    <property type="project" value="UniProtKB-KW"/>
</dbReference>
<dbReference type="CDD" id="cd02440">
    <property type="entry name" value="AdoMet_MTases"/>
    <property type="match status" value="1"/>
</dbReference>
<dbReference type="FunFam" id="1.10.10.10:FF:000357">
    <property type="entry name" value="Caffeic acid 3-O-methyltransferase"/>
    <property type="match status" value="1"/>
</dbReference>
<dbReference type="FunFam" id="3.40.50.150:FF:000061">
    <property type="entry name" value="Caffeic acid O-methyltransferase"/>
    <property type="match status" value="1"/>
</dbReference>
<dbReference type="Gene3D" id="3.40.50.150">
    <property type="entry name" value="Vaccinia Virus protein VP39"/>
    <property type="match status" value="1"/>
</dbReference>
<dbReference type="Gene3D" id="1.10.10.10">
    <property type="entry name" value="Winged helix-like DNA-binding domain superfamily/Winged helix DNA-binding domain"/>
    <property type="match status" value="1"/>
</dbReference>
<dbReference type="InterPro" id="IPR016461">
    <property type="entry name" value="COMT-like"/>
</dbReference>
<dbReference type="InterPro" id="IPR001077">
    <property type="entry name" value="O_MeTrfase_dom"/>
</dbReference>
<dbReference type="InterPro" id="IPR012967">
    <property type="entry name" value="Plant_O-MeTrfase_dimerisation"/>
</dbReference>
<dbReference type="InterPro" id="IPR029063">
    <property type="entry name" value="SAM-dependent_MTases_sf"/>
</dbReference>
<dbReference type="InterPro" id="IPR036388">
    <property type="entry name" value="WH-like_DNA-bd_sf"/>
</dbReference>
<dbReference type="InterPro" id="IPR036390">
    <property type="entry name" value="WH_DNA-bd_sf"/>
</dbReference>
<dbReference type="PANTHER" id="PTHR11746">
    <property type="entry name" value="O-METHYLTRANSFERASE"/>
    <property type="match status" value="1"/>
</dbReference>
<dbReference type="Pfam" id="PF08100">
    <property type="entry name" value="Dimerisation"/>
    <property type="match status" value="1"/>
</dbReference>
<dbReference type="Pfam" id="PF00891">
    <property type="entry name" value="Methyltransf_2"/>
    <property type="match status" value="1"/>
</dbReference>
<dbReference type="PIRSF" id="PIRSF005739">
    <property type="entry name" value="O-mtase"/>
    <property type="match status" value="1"/>
</dbReference>
<dbReference type="SUPFAM" id="SSF53335">
    <property type="entry name" value="S-adenosyl-L-methionine-dependent methyltransferases"/>
    <property type="match status" value="1"/>
</dbReference>
<dbReference type="SUPFAM" id="SSF46785">
    <property type="entry name" value="Winged helix' DNA-binding domain"/>
    <property type="match status" value="1"/>
</dbReference>
<dbReference type="PROSITE" id="PS51683">
    <property type="entry name" value="SAM_OMT_II"/>
    <property type="match status" value="1"/>
</dbReference>
<keyword id="KW-0002">3D-structure</keyword>
<keyword id="KW-0903">Direct protein sequencing</keyword>
<keyword id="KW-0489">Methyltransferase</keyword>
<keyword id="KW-0949">S-adenosyl-L-methionine</keyword>
<keyword id="KW-0808">Transferase</keyword>
<evidence type="ECO:0000255" key="1">
    <source>
        <dbReference type="PROSITE-ProRule" id="PRU01020"/>
    </source>
</evidence>
<evidence type="ECO:0000269" key="2">
    <source>
    </source>
</evidence>
<evidence type="ECO:0000269" key="3">
    <source>
    </source>
</evidence>
<evidence type="ECO:0000269" key="4">
    <source>
    </source>
</evidence>
<evidence type="ECO:0007829" key="5">
    <source>
        <dbReference type="PDB" id="5CVV"/>
    </source>
</evidence>
<sequence>MGSTGNAEIQIIPTHSSDEEANLFAMQLASAAVLPMALKAAIELDVLEIMAKSVPPSGYISPAEIAAQLPTTNPEAPVMLDRVLRLLASYSVVTYTLRELPSGKVERLYGLAPVCKFLTKNEDGVSLAPFLLTATDKVLLEPWFYLKDAILEGGIPFNKAYGMNEFDYHGTDHRFNKVFNKGMSSNSTITMKKILEMYNGFEGLTTIVDVGGGTGAVASMIVAKYPSINAINFDLPHVIQDAPAFSGVEHLGGDMFDGVPKGDAIFIKWICHDWSDEHCLKLLKNCYAALPDHGKVIVAEYILPPSPDPSIATKVVIHTDALMLAYNPGGKERTEKEFQALAMASGFRGFKVASCAFNTYVMEFLKTA</sequence>
<reference key="1">
    <citation type="journal article" date="1997" name="Plant Physiol.">
        <title>Floral scent production in Clarkia breweri (Onagraceae). II. Localization and developmental modulation of the enzyme S-adenosyl-L-methionine:(iso)eugenol O-methyltransferase and phenylpropanoid emission.</title>
        <authorList>
            <person name="Wang J."/>
            <person name="Dudareva N."/>
            <person name="Bhakta S."/>
            <person name="Raguso R.A."/>
            <person name="Pichersky E."/>
        </authorList>
    </citation>
    <scope>NUCLEOTIDE SEQUENCE [MRNA]</scope>
    <scope>PROTEIN SEQUENCE OF 3-13; 79-99 AND 255-268</scope>
    <scope>DEVELOPMENTAL STAGE</scope>
    <scope>TISSUE SPECIFICITY</scope>
    <source>
        <tissue>Flower</tissue>
    </source>
</reference>
<reference key="2">
    <citation type="journal article" date="1999" name="Arch. Biochem. Biophys.">
        <title>Identification of specific residues involved in substrate discrimination in two plant O-methyltransferases.</title>
        <authorList>
            <person name="Wang J."/>
            <person name="Pichersky E."/>
        </authorList>
    </citation>
    <scope>MUTAGENESIS OF 95-TYR-THR-96; SER-102; 130-PHE-LEU-131; 133-THR--THR-135; LEU-140; PRO-142; PHE-144; 164-ASN-GLU-165 AND HIS-173</scope>
</reference>
<reference key="3">
    <citation type="journal article" date="2012" name="Plant Cell">
        <title>An engineered monolignol 4-O-methyltransferase depresses lignin biosynthesis and confers novel metabolic capability in Arabidopsis.</title>
        <authorList>
            <person name="Zhang K."/>
            <person name="Bhuiya M.W."/>
            <person name="Pazo J.R."/>
            <person name="Miao Y."/>
            <person name="Kim H."/>
            <person name="Ralph J."/>
            <person name="Liu C.J."/>
        </authorList>
    </citation>
    <scope>X-RAY CRYSTALLOGRAPHY (2.47 ANGSTROMS) IN COMPLEX WITH S-ADENOSYL-L-HOMOCYSTEINE</scope>
</reference>
<comment type="function">
    <text>Catalyzes the methylation of the para-4-hydroxyl of both eugenol and (iso)eugenol to methyleugenol and isomethyleugenol, respectively. The resulting products are part of a complex mixture of low-molecular-weight volatile compounds emitted by the flowers to attract pollinators.</text>
</comment>
<comment type="catalytic activity">
    <reaction>
        <text>(E)-isoeugenol + S-adenosyl-L-methionine = (E)-isomethyleugenol + S-adenosyl-L-homocysteine + H(+)</text>
        <dbReference type="Rhea" id="RHEA:17081"/>
        <dbReference type="ChEBI" id="CHEBI:6877"/>
        <dbReference type="ChEBI" id="CHEBI:15378"/>
        <dbReference type="ChEBI" id="CHEBI:50545"/>
        <dbReference type="ChEBI" id="CHEBI:57856"/>
        <dbReference type="ChEBI" id="CHEBI:59789"/>
        <dbReference type="EC" id="2.1.1.146"/>
    </reaction>
</comment>
<comment type="subunit">
    <text>Homodimer.</text>
</comment>
<comment type="tissue specificity">
    <text evidence="4">Expressed in petals, style and stamens, but not in stigma, sepals, leaves or stem tissues.</text>
</comment>
<comment type="developmental stage">
    <text evidence="4">Expressed during flower development with a peak just before anthesis.</text>
</comment>
<comment type="miscellaneous">
    <text>(iso)eugenol O-methyltransferase (IEMT) not only has distinct substrate specificity from Caffeic acid 3-O-methyltransferases (COMT), a highly homologous enzyme, but it also methylates the hydroxyl group at the para position rather than at the meta position as COMT does.</text>
</comment>
<comment type="similarity">
    <text evidence="1">Belongs to the class I-like SAM-binding methyltransferase superfamily. Cation-independent O-methyltransferase family. COMT subfamily.</text>
</comment>